<sequence length="224" mass="24133">MDQFIKQDETGDLIETGMNVANHFLSAPIQGTNSLSKATIIPGVAPVLIGNPEQKNIQYPTTSHQGSKSKGRGSGARPIIVSSSEGGTGGTQVPEPLFAQTGQGGIVTTVYQDPTIQPTGSYRSVELAKIGKERMINRFVEKPRTSTPVTEFKRGAGSGCSRPDNPRGGHRREWSLSWVQGEVRVFEWCNPICSPITAAARFHSCKCGNCPAKCDQCERDYGPP</sequence>
<evidence type="ECO:0000250" key="1">
    <source>
        <dbReference type="UniProtKB" id="P11207"/>
    </source>
</evidence>
<evidence type="ECO:0000250" key="2">
    <source>
        <dbReference type="UniProtKB" id="P30927"/>
    </source>
</evidence>
<evidence type="ECO:0000250" key="3">
    <source>
        <dbReference type="UniProtKB" id="Q8QV69"/>
    </source>
</evidence>
<evidence type="ECO:0000256" key="4">
    <source>
        <dbReference type="SAM" id="MobiDB-lite"/>
    </source>
</evidence>
<evidence type="ECO:0000269" key="5">
    <source>
    </source>
</evidence>
<evidence type="ECO:0000269" key="6">
    <source>
    </source>
</evidence>
<evidence type="ECO:0000269" key="7">
    <source>
    </source>
</evidence>
<evidence type="ECO:0000305" key="8"/>
<dbReference type="EMBL" id="D00352">
    <property type="status" value="NOT_ANNOTATED_CDS"/>
    <property type="molecule type" value="Genomic_RNA"/>
</dbReference>
<dbReference type="EMBL" id="AB040874">
    <property type="protein sequence ID" value="BAA94386.1"/>
    <property type="molecule type" value="Genomic_RNA"/>
</dbReference>
<dbReference type="PIR" id="A46343">
    <property type="entry name" value="A46343"/>
</dbReference>
<dbReference type="SMR" id="P30928"/>
<dbReference type="Proteomes" id="UP000002331">
    <property type="component" value="Segment"/>
</dbReference>
<dbReference type="GO" id="GO:0030430">
    <property type="term" value="C:host cell cytoplasm"/>
    <property type="evidence" value="ECO:0007669"/>
    <property type="project" value="UniProtKB-SubCell"/>
</dbReference>
<dbReference type="GO" id="GO:0046872">
    <property type="term" value="F:metal ion binding"/>
    <property type="evidence" value="ECO:0007669"/>
    <property type="project" value="UniProtKB-KW"/>
</dbReference>
<dbReference type="GO" id="GO:0039554">
    <property type="term" value="P:symbiont-mediated suppression of host cytoplasmic pattern recognition receptor signaling pathway via inhibition of MDA-5 activity"/>
    <property type="evidence" value="ECO:0007669"/>
    <property type="project" value="UniProtKB-KW"/>
</dbReference>
<dbReference type="GO" id="GO:0039563">
    <property type="term" value="P:symbiont-mediated suppression of host JAK-STAT cascade via inhibition of STAT1 activity"/>
    <property type="evidence" value="ECO:0007669"/>
    <property type="project" value="UniProtKB-KW"/>
</dbReference>
<dbReference type="GO" id="GO:0039564">
    <property type="term" value="P:symbiont-mediated suppression of host JAK-STAT cascade via inhibition of STAT2 activity"/>
    <property type="evidence" value="ECO:0007669"/>
    <property type="project" value="UniProtKB-KW"/>
</dbReference>
<dbReference type="GO" id="GO:0039502">
    <property type="term" value="P:symbiont-mediated suppression of host type I interferon-mediated signaling pathway"/>
    <property type="evidence" value="ECO:0007669"/>
    <property type="project" value="UniProtKB-KW"/>
</dbReference>
<dbReference type="FunFam" id="4.10.80.340:FF:000001">
    <property type="entry name" value="Protein V"/>
    <property type="match status" value="1"/>
</dbReference>
<dbReference type="Gene3D" id="4.10.80.340">
    <property type="match status" value="1"/>
</dbReference>
<dbReference type="InterPro" id="IPR024279">
    <property type="entry name" value="Paramyx_V_Zn-bd"/>
</dbReference>
<dbReference type="Pfam" id="PF13008">
    <property type="entry name" value="zf-Paramyx-P"/>
    <property type="match status" value="1"/>
</dbReference>
<proteinExistence type="evidence at protein level"/>
<organism>
    <name type="scientific">Mumps virus genotype B (strain Miyahara vaccine)</name>
    <name type="common">MuV</name>
    <dbReference type="NCBI Taxonomy" id="11171"/>
    <lineage>
        <taxon>Viruses</taxon>
        <taxon>Riboviria</taxon>
        <taxon>Orthornavirae</taxon>
        <taxon>Negarnaviricota</taxon>
        <taxon>Haploviricotina</taxon>
        <taxon>Monjiviricetes</taxon>
        <taxon>Mononegavirales</taxon>
        <taxon>Paramyxoviridae</taxon>
        <taxon>Rubulavirinae</taxon>
        <taxon>Orthorubulavirus</taxon>
        <taxon>Orthorubulavirus parotitidis</taxon>
        <taxon>Mumps orthorubulavirus</taxon>
    </lineage>
</organism>
<gene>
    <name evidence="8" type="primary">P/V/I</name>
</gene>
<protein>
    <recommendedName>
        <fullName>Non-structural protein V</fullName>
    </recommendedName>
    <alternativeName>
        <fullName>Non-structural protein NS1</fullName>
    </alternativeName>
</protein>
<name>V_MUMPM</name>
<organismHost>
    <name type="scientific">Homo sapiens</name>
    <name type="common">Human</name>
    <dbReference type="NCBI Taxonomy" id="9606"/>
</organismHost>
<accession>P30928</accession>
<accession>Q783W0</accession>
<feature type="chain" id="PRO_0000142820" description="Non-structural protein V">
    <location>
        <begin position="1"/>
        <end position="224"/>
    </location>
</feature>
<feature type="region of interest" description="Disordered" evidence="4">
    <location>
        <begin position="55"/>
        <end position="90"/>
    </location>
</feature>
<feature type="region of interest" description="Disordered" evidence="4">
    <location>
        <begin position="145"/>
        <end position="172"/>
    </location>
</feature>
<feature type="compositionally biased region" description="Polar residues" evidence="4">
    <location>
        <begin position="55"/>
        <end position="65"/>
    </location>
</feature>
<feature type="binding site" evidence="1">
    <location>
        <position position="170"/>
    </location>
    <ligand>
        <name>Zn(2+)</name>
        <dbReference type="ChEBI" id="CHEBI:29105"/>
        <label>1</label>
    </ligand>
</feature>
<feature type="binding site" evidence="1">
    <location>
        <position position="189"/>
    </location>
    <ligand>
        <name>Zn(2+)</name>
        <dbReference type="ChEBI" id="CHEBI:29105"/>
        <label>1</label>
    </ligand>
</feature>
<feature type="binding site" evidence="1">
    <location>
        <position position="193"/>
    </location>
    <ligand>
        <name>Zn(2+)</name>
        <dbReference type="ChEBI" id="CHEBI:29105"/>
        <label>2</label>
    </ligand>
</feature>
<feature type="binding site" evidence="1">
    <location>
        <position position="205"/>
    </location>
    <ligand>
        <name>Zn(2+)</name>
        <dbReference type="ChEBI" id="CHEBI:29105"/>
        <label>2</label>
    </ligand>
</feature>
<feature type="binding site" evidence="1">
    <location>
        <position position="207"/>
    </location>
    <ligand>
        <name>Zn(2+)</name>
        <dbReference type="ChEBI" id="CHEBI:29105"/>
        <label>2</label>
    </ligand>
</feature>
<feature type="binding site" evidence="1">
    <location>
        <position position="210"/>
    </location>
    <ligand>
        <name>Zn(2+)</name>
        <dbReference type="ChEBI" id="CHEBI:29105"/>
        <label>2</label>
    </ligand>
</feature>
<feature type="binding site" evidence="1">
    <location>
        <position position="214"/>
    </location>
    <ligand>
        <name>Zn(2+)</name>
        <dbReference type="ChEBI" id="CHEBI:29105"/>
        <label>1</label>
    </ligand>
</feature>
<feature type="binding site" evidence="1">
    <location>
        <position position="217"/>
    </location>
    <ligand>
        <name>Zn(2+)</name>
        <dbReference type="ChEBI" id="CHEBI:29105"/>
        <label>1</label>
    </ligand>
</feature>
<reference key="1">
    <citation type="journal article" date="1988" name="J. Gen. Virol.">
        <title>Molecular cloning and sequence analysis of the mumps virus gene encoding the P protein: mumps virus P gene is monocistronic.</title>
        <authorList>
            <person name="Takeuchi K."/>
            <person name="Hishiyama M."/>
            <person name="Yamada A."/>
            <person name="Sugiura A."/>
        </authorList>
    </citation>
    <scope>NUCLEOTIDE SEQUENCE [GENOMIC RNA]</scope>
</reference>
<reference key="2">
    <citation type="journal article" date="1990" name="Virology">
        <title>Detection and characterization of mumps virus V protein.</title>
        <authorList>
            <person name="Takeuchi K."/>
            <person name="Tanabayashi K."/>
            <person name="Hishiyama M."/>
            <person name="Yamada Y.K."/>
            <person name="Yamada A."/>
            <person name="Sugiura A."/>
        </authorList>
    </citation>
    <scope>NUCLEOTIDE SEQUENCE [GENOMIC RNA]</scope>
    <scope>RNA EDITING</scope>
</reference>
<reference key="3">
    <citation type="journal article" date="1992" name="Virology">
        <title>Molecular cloning and sequence analysis of the mumps virus gene encoding the L protein and the trailer sequence.</title>
        <authorList>
            <person name="Okazaki K."/>
            <person name="Tanabayashi K."/>
            <person name="Takeuchi K."/>
            <person name="Hishiyama M."/>
            <person name="Okazaki K."/>
            <person name="Yamada A."/>
        </authorList>
    </citation>
    <scope>NUCLEOTIDE SEQUENCE [GENOMIC RNA]</scope>
</reference>
<reference key="4">
    <citation type="journal article" date="2003" name="J. Virol.">
        <title>STAT3 ubiquitylation and degradation by mumps virus suppress cytokine and oncogene signaling.</title>
        <authorList>
            <person name="Ulane C.M."/>
            <person name="Rodriguez J.J."/>
            <person name="Parisien J.P."/>
            <person name="Horvath C.M."/>
        </authorList>
    </citation>
    <scope>FUNCTION</scope>
    <scope>INTERACTION WITH HOST STAT1; STAT2; STAT3; DDB1 AND CUL4A</scope>
    <source>
        <strain>Enders</strain>
    </source>
</reference>
<reference key="5">
    <citation type="journal article" date="2005" name="J. Virol.">
        <title>Mumps virus V protein antagonizes interferon without the complete degradation of STAT1.</title>
        <authorList>
            <person name="Kubota T."/>
            <person name="Yokosawa N."/>
            <person name="Yokota S."/>
            <person name="Fujii N."/>
            <person name="Tashiro M."/>
            <person name="Kato A."/>
        </authorList>
    </citation>
    <scope>FUNCTION</scope>
    <source>
        <strain>RW</strain>
    </source>
</reference>
<comment type="function">
    <text evidence="2 5 6">Plays an essential role in the inhibition of host immune response. Prevents the establishment of cellular antiviral state by blocking interferon-alpha/beta (IFN-alpha/beta) production and signaling pathway. Interacts with host IFIH1/MDA5 and DHX58/LGP2 to inhibit the transduction pathway involved in the activation of IFN-beta promoter, thus protecting the virus against cell antiviral state (By similarity). Blocks the type I and II interferon signaling pathways by interacting with host STAT1, STAT2 and STAT3, and mediating their ubiquitination and subsequent proteasomal degradation (PubMed:12743296, PubMed:15767445).</text>
</comment>
<comment type="subunit">
    <text evidence="2 5">Interacts with host IFIH1/MDA5 and DHX58/LGP2 (By similarity). Forms with host DDB1, CUL4A, STAT1, STAT2 and STAT3 the mumps virus V-dependent complex (VDC) (PubMed:12743296).</text>
</comment>
<comment type="subcellular location">
    <subcellularLocation>
        <location evidence="3">Virion</location>
    </subcellularLocation>
    <subcellularLocation>
        <location evidence="8">Host cytoplasm</location>
    </subcellularLocation>
</comment>
<comment type="RNA editing">
    <location>
        <position position="155" evidence="7"/>
    </location>
    <text>Partially edited. RNA editing at this position consists of an insertion of 2 or 4 guanine nucleotides. The sequence displayed here is the V protein, derived from the unedited RNA. The edited RNA (+ 2 nucleotides) gives rise to the P protein (AC P16595). The edited RNA (+ 4 nucleotide) gives rise to the I protein.</text>
</comment>
<comment type="similarity">
    <text evidence="8">Belongs to the paramyxoviruses V protein family.</text>
</comment>
<keyword id="KW-1035">Host cytoplasm</keyword>
<keyword id="KW-0945">Host-virus interaction</keyword>
<keyword id="KW-1090">Inhibition of host innate immune response by virus</keyword>
<keyword id="KW-1114">Inhibition of host interferon signaling pathway by virus</keyword>
<keyword id="KW-1089">Inhibition of host MDA5 by virus</keyword>
<keyword id="KW-1113">Inhibition of host RLR pathway by virus</keyword>
<keyword id="KW-1105">Inhibition of host STAT1 by virus</keyword>
<keyword id="KW-1106">Inhibition of host STAT2 by virus</keyword>
<keyword id="KW-0922">Interferon antiviral system evasion</keyword>
<keyword id="KW-0479">Metal-binding</keyword>
<keyword id="KW-1185">Reference proteome</keyword>
<keyword id="KW-0691">RNA editing</keyword>
<keyword id="KW-0899">Viral immunoevasion</keyword>
<keyword id="KW-0946">Virion</keyword>
<keyword id="KW-0862">Zinc</keyword>